<sequence>MGEVVLPGTAIGLKTSEGVVLASEKRLTYDGFVLSRNARKIHMITNHIGVGFAGLMGDVNFLVKVLRLEAKNYELQHGREIKTRSLAKLLSVILYSYKLAPMLTEVVVGGYDEEGPSLYILDPVGSVIEEKYVAVGSGAQLALGYIEPRYNPGLGLKEAEELAVNAVKTVIERDVLSGDGIDLVVIDKNGYQSKEIIFKMTG</sequence>
<organism>
    <name type="scientific">Desulfurococcus amylolyticus (strain DSM 18924 / JCM 16383 / VKM B-2413 / 1221n)</name>
    <name type="common">Desulfurococcus kamchatkensis</name>
    <dbReference type="NCBI Taxonomy" id="490899"/>
    <lineage>
        <taxon>Archaea</taxon>
        <taxon>Thermoproteota</taxon>
        <taxon>Thermoprotei</taxon>
        <taxon>Desulfurococcales</taxon>
        <taxon>Desulfurococcaceae</taxon>
        <taxon>Desulfurococcus</taxon>
    </lineage>
</organism>
<reference key="1">
    <citation type="journal article" date="2009" name="J. Bacteriol.">
        <title>Complete genome sequence of the anaerobic, protein-degrading hyperthermophilic crenarchaeon Desulfurococcus kamchatkensis.</title>
        <authorList>
            <person name="Ravin N.V."/>
            <person name="Mardanov A.V."/>
            <person name="Beletsky A.V."/>
            <person name="Kublanov I.V."/>
            <person name="Kolganova T.V."/>
            <person name="Lebedinsky A.V."/>
            <person name="Chernyh N.A."/>
            <person name="Bonch-Osmolovskaya E.A."/>
            <person name="Skryabin K.G."/>
        </authorList>
    </citation>
    <scope>NUCLEOTIDE SEQUENCE [LARGE SCALE GENOMIC DNA]</scope>
    <source>
        <strain>DSM 18924 / JCM 16383 / VKM B-2413 / 1221n</strain>
    </source>
</reference>
<evidence type="ECO:0000255" key="1">
    <source>
        <dbReference type="HAMAP-Rule" id="MF_02113"/>
    </source>
</evidence>
<name>PSB1_DESA1</name>
<comment type="function">
    <text evidence="1">Component of the proteasome core, a large protease complex with broad specificity involved in protein degradation.</text>
</comment>
<comment type="catalytic activity">
    <reaction evidence="1">
        <text>Cleavage of peptide bonds with very broad specificity.</text>
        <dbReference type="EC" id="3.4.25.1"/>
    </reaction>
</comment>
<comment type="activity regulation">
    <text evidence="1">The formation of the proteasomal ATPase PAN-20S proteasome complex, via the docking of the C-termini of PAN into the intersubunit pockets in the alpha-rings, triggers opening of the gate for substrate entry. Interconversion between the open-gate and close-gate conformations leads to a dynamic regulation of the 20S proteasome proteolysis activity.</text>
</comment>
<comment type="subunit">
    <text evidence="1">The 20S proteasome core is composed of 14 alpha and 14 beta subunits that assemble into four stacked heptameric rings, resulting in a barrel-shaped structure. The two inner rings, each composed of seven catalytic beta subunits, are sandwiched by two outer rings, each composed of seven alpha subunits. The catalytic chamber with the active sites is on the inside of the barrel. Has a gated structure, the ends of the cylinder being occluded by the N-termini of the alpha-subunits. Is capped at one or both ends by the proteasome regulatory ATPase, PAN.</text>
</comment>
<comment type="subcellular location">
    <subcellularLocation>
        <location evidence="1">Cytoplasm</location>
    </subcellularLocation>
</comment>
<comment type="similarity">
    <text evidence="1">Belongs to the peptidase T1B family.</text>
</comment>
<keyword id="KW-0068">Autocatalytic cleavage</keyword>
<keyword id="KW-0963">Cytoplasm</keyword>
<keyword id="KW-0378">Hydrolase</keyword>
<keyword id="KW-0645">Protease</keyword>
<keyword id="KW-0647">Proteasome</keyword>
<keyword id="KW-0888">Threonine protease</keyword>
<keyword id="KW-0865">Zymogen</keyword>
<gene>
    <name evidence="1" type="primary">psmB1</name>
    <name type="ordered locus">DKAM_1278</name>
</gene>
<proteinExistence type="inferred from homology"/>
<dbReference type="EC" id="3.4.25.1" evidence="1"/>
<dbReference type="EMBL" id="CP001140">
    <property type="protein sequence ID" value="ACL11604.1"/>
    <property type="molecule type" value="Genomic_DNA"/>
</dbReference>
<dbReference type="RefSeq" id="WP_012608945.1">
    <property type="nucleotide sequence ID" value="NC_011766.1"/>
</dbReference>
<dbReference type="SMR" id="B8D673"/>
<dbReference type="STRING" id="490899.DKAM_1278"/>
<dbReference type="GeneID" id="13061787"/>
<dbReference type="GeneID" id="7171339"/>
<dbReference type="KEGG" id="dka:DKAM_1278"/>
<dbReference type="eggNOG" id="arCOG00970">
    <property type="taxonomic scope" value="Archaea"/>
</dbReference>
<dbReference type="HOGENOM" id="CLU_035750_7_2_2"/>
<dbReference type="Proteomes" id="UP000006903">
    <property type="component" value="Chromosome"/>
</dbReference>
<dbReference type="GO" id="GO:0005737">
    <property type="term" value="C:cytoplasm"/>
    <property type="evidence" value="ECO:0007669"/>
    <property type="project" value="UniProtKB-SubCell"/>
</dbReference>
<dbReference type="GO" id="GO:0019774">
    <property type="term" value="C:proteasome core complex, beta-subunit complex"/>
    <property type="evidence" value="ECO:0007669"/>
    <property type="project" value="UniProtKB-UniRule"/>
</dbReference>
<dbReference type="GO" id="GO:0004298">
    <property type="term" value="F:threonine-type endopeptidase activity"/>
    <property type="evidence" value="ECO:0007669"/>
    <property type="project" value="UniProtKB-UniRule"/>
</dbReference>
<dbReference type="GO" id="GO:0010498">
    <property type="term" value="P:proteasomal protein catabolic process"/>
    <property type="evidence" value="ECO:0007669"/>
    <property type="project" value="UniProtKB-UniRule"/>
</dbReference>
<dbReference type="Gene3D" id="3.60.20.10">
    <property type="entry name" value="Glutamine Phosphoribosylpyrophosphate, subunit 1, domain 1"/>
    <property type="match status" value="1"/>
</dbReference>
<dbReference type="HAMAP" id="MF_02113_A">
    <property type="entry name" value="Proteasome_B_A"/>
    <property type="match status" value="1"/>
</dbReference>
<dbReference type="InterPro" id="IPR029055">
    <property type="entry name" value="Ntn_hydrolases_N"/>
</dbReference>
<dbReference type="InterPro" id="IPR019983">
    <property type="entry name" value="Pept_T1A_Psome_bsu_arc"/>
</dbReference>
<dbReference type="InterPro" id="IPR000243">
    <property type="entry name" value="Pept_T1A_subB"/>
</dbReference>
<dbReference type="InterPro" id="IPR001353">
    <property type="entry name" value="Proteasome_sua/b"/>
</dbReference>
<dbReference type="InterPro" id="IPR023333">
    <property type="entry name" value="Proteasome_suB-type"/>
</dbReference>
<dbReference type="NCBIfam" id="TIGR03634">
    <property type="entry name" value="arc_protsome_B"/>
    <property type="match status" value="1"/>
</dbReference>
<dbReference type="PANTHER" id="PTHR32194:SF0">
    <property type="entry name" value="ATP-DEPENDENT PROTEASE SUBUNIT HSLV"/>
    <property type="match status" value="1"/>
</dbReference>
<dbReference type="PANTHER" id="PTHR32194">
    <property type="entry name" value="METALLOPROTEASE TLDD"/>
    <property type="match status" value="1"/>
</dbReference>
<dbReference type="Pfam" id="PF00227">
    <property type="entry name" value="Proteasome"/>
    <property type="match status" value="1"/>
</dbReference>
<dbReference type="PRINTS" id="PR00141">
    <property type="entry name" value="PROTEASOME"/>
</dbReference>
<dbReference type="SUPFAM" id="SSF56235">
    <property type="entry name" value="N-terminal nucleophile aminohydrolases (Ntn hydrolases)"/>
    <property type="match status" value="1"/>
</dbReference>
<dbReference type="PROSITE" id="PS51476">
    <property type="entry name" value="PROTEASOME_BETA_2"/>
    <property type="match status" value="1"/>
</dbReference>
<protein>
    <recommendedName>
        <fullName evidence="1">Proteasome subunit beta 1</fullName>
        <ecNumber evidence="1">3.4.25.1</ecNumber>
    </recommendedName>
    <alternativeName>
        <fullName evidence="1">20S proteasome beta subunit 1</fullName>
    </alternativeName>
    <alternativeName>
        <fullName evidence="1">Proteasome core protein PsmB 1</fullName>
    </alternativeName>
</protein>
<accession>B8D673</accession>
<feature type="propeptide" id="PRO_0000397288" description="Removed in mature form; by autocatalysis" evidence="1">
    <location>
        <begin position="1"/>
        <end position="8"/>
    </location>
</feature>
<feature type="chain" id="PRO_0000397289" description="Proteasome subunit beta 1">
    <location>
        <begin position="9"/>
        <end position="202"/>
    </location>
</feature>
<feature type="active site" description="Nucleophile" evidence="1">
    <location>
        <position position="9"/>
    </location>
</feature>